<protein>
    <recommendedName>
        <fullName evidence="1">Glutamine--tRNA ligase</fullName>
        <ecNumber evidence="1">6.1.1.18</ecNumber>
    </recommendedName>
    <alternativeName>
        <fullName evidence="1">Glutaminyl-tRNA synthetase</fullName>
        <shortName evidence="1">GlnRS</shortName>
    </alternativeName>
</protein>
<gene>
    <name evidence="1" type="primary">glnS</name>
    <name type="ordered locus">RALTA_A2274</name>
</gene>
<reference key="1">
    <citation type="journal article" date="2008" name="Genome Res.">
        <title>Genome sequence of the beta-rhizobium Cupriavidus taiwanensis and comparative genomics of rhizobia.</title>
        <authorList>
            <person name="Amadou C."/>
            <person name="Pascal G."/>
            <person name="Mangenot S."/>
            <person name="Glew M."/>
            <person name="Bontemps C."/>
            <person name="Capela D."/>
            <person name="Carrere S."/>
            <person name="Cruveiller S."/>
            <person name="Dossat C."/>
            <person name="Lajus A."/>
            <person name="Marchetti M."/>
            <person name="Poinsot V."/>
            <person name="Rouy Z."/>
            <person name="Servin B."/>
            <person name="Saad M."/>
            <person name="Schenowitz C."/>
            <person name="Barbe V."/>
            <person name="Batut J."/>
            <person name="Medigue C."/>
            <person name="Masson-Boivin C."/>
        </authorList>
    </citation>
    <scope>NUCLEOTIDE SEQUENCE [LARGE SCALE GENOMIC DNA]</scope>
    <source>
        <strain>DSM 17343 / BCRC 17206 / CCUG 44338 / CIP 107171 / LMG 19424 / R1</strain>
    </source>
</reference>
<dbReference type="EC" id="6.1.1.18" evidence="1"/>
<dbReference type="EMBL" id="CU633749">
    <property type="protein sequence ID" value="CAQ70208.1"/>
    <property type="molecule type" value="Genomic_DNA"/>
</dbReference>
<dbReference type="RefSeq" id="WP_012353512.1">
    <property type="nucleotide sequence ID" value="NC_010528.1"/>
</dbReference>
<dbReference type="SMR" id="B3R5N3"/>
<dbReference type="GeneID" id="29762244"/>
<dbReference type="KEGG" id="cti:RALTA_A2274"/>
<dbReference type="eggNOG" id="COG0008">
    <property type="taxonomic scope" value="Bacteria"/>
</dbReference>
<dbReference type="HOGENOM" id="CLU_001882_2_3_4"/>
<dbReference type="BioCyc" id="CTAI977880:RALTA_RS11030-MONOMER"/>
<dbReference type="Proteomes" id="UP000001692">
    <property type="component" value="Chromosome 1"/>
</dbReference>
<dbReference type="GO" id="GO:0005829">
    <property type="term" value="C:cytosol"/>
    <property type="evidence" value="ECO:0007669"/>
    <property type="project" value="TreeGrafter"/>
</dbReference>
<dbReference type="GO" id="GO:0005524">
    <property type="term" value="F:ATP binding"/>
    <property type="evidence" value="ECO:0007669"/>
    <property type="project" value="UniProtKB-UniRule"/>
</dbReference>
<dbReference type="GO" id="GO:0004819">
    <property type="term" value="F:glutamine-tRNA ligase activity"/>
    <property type="evidence" value="ECO:0007669"/>
    <property type="project" value="UniProtKB-UniRule"/>
</dbReference>
<dbReference type="GO" id="GO:0006425">
    <property type="term" value="P:glutaminyl-tRNA aminoacylation"/>
    <property type="evidence" value="ECO:0007669"/>
    <property type="project" value="InterPro"/>
</dbReference>
<dbReference type="GO" id="GO:0006424">
    <property type="term" value="P:glutamyl-tRNA aminoacylation"/>
    <property type="evidence" value="ECO:0007669"/>
    <property type="project" value="UniProtKB-UniRule"/>
</dbReference>
<dbReference type="CDD" id="cd00807">
    <property type="entry name" value="GlnRS_core"/>
    <property type="match status" value="1"/>
</dbReference>
<dbReference type="FunFam" id="1.10.1160.10:FF:000001">
    <property type="entry name" value="Glutamine--tRNA ligase"/>
    <property type="match status" value="1"/>
</dbReference>
<dbReference type="FunFam" id="3.90.800.10:FF:000001">
    <property type="entry name" value="Glutamine--tRNA ligase"/>
    <property type="match status" value="1"/>
</dbReference>
<dbReference type="FunFam" id="3.40.50.620:FF:000037">
    <property type="entry name" value="Glutamine--tRNA ligase cytoplasmic"/>
    <property type="match status" value="1"/>
</dbReference>
<dbReference type="Gene3D" id="1.10.1160.10">
    <property type="entry name" value="Glutamyl-trna Synthetase, Domain 2"/>
    <property type="match status" value="1"/>
</dbReference>
<dbReference type="Gene3D" id="3.90.800.10">
    <property type="entry name" value="Glutamyl-tRNA Synthetase, Domain 3"/>
    <property type="match status" value="1"/>
</dbReference>
<dbReference type="Gene3D" id="3.40.50.620">
    <property type="entry name" value="HUPs"/>
    <property type="match status" value="1"/>
</dbReference>
<dbReference type="Gene3D" id="2.40.240.10">
    <property type="entry name" value="Ribosomal Protein L25, Chain P"/>
    <property type="match status" value="2"/>
</dbReference>
<dbReference type="HAMAP" id="MF_00126">
    <property type="entry name" value="Gln_tRNA_synth"/>
    <property type="match status" value="1"/>
</dbReference>
<dbReference type="InterPro" id="IPR001412">
    <property type="entry name" value="aa-tRNA-synth_I_CS"/>
</dbReference>
<dbReference type="InterPro" id="IPR004514">
    <property type="entry name" value="Gln-tRNA-synth"/>
</dbReference>
<dbReference type="InterPro" id="IPR050132">
    <property type="entry name" value="Gln/Glu-tRNA_Ligase"/>
</dbReference>
<dbReference type="InterPro" id="IPR022861">
    <property type="entry name" value="Gln_tRNA_ligase_bac"/>
</dbReference>
<dbReference type="InterPro" id="IPR000924">
    <property type="entry name" value="Glu/Gln-tRNA-synth"/>
</dbReference>
<dbReference type="InterPro" id="IPR020058">
    <property type="entry name" value="Glu/Gln-tRNA-synth_Ib_cat-dom"/>
</dbReference>
<dbReference type="InterPro" id="IPR020059">
    <property type="entry name" value="Glu/Gln-tRNA-synth_Ib_codon-bd"/>
</dbReference>
<dbReference type="InterPro" id="IPR020061">
    <property type="entry name" value="Glu_tRNA_lig_a-bdl"/>
</dbReference>
<dbReference type="InterPro" id="IPR020056">
    <property type="entry name" value="Rbsml_bL25/Gln-tRNA_synth_N"/>
</dbReference>
<dbReference type="InterPro" id="IPR011035">
    <property type="entry name" value="Ribosomal_bL25/Gln-tRNA_synth"/>
</dbReference>
<dbReference type="InterPro" id="IPR014729">
    <property type="entry name" value="Rossmann-like_a/b/a_fold"/>
</dbReference>
<dbReference type="InterPro" id="IPR049437">
    <property type="entry name" value="tRNA-synt_1c_C2"/>
</dbReference>
<dbReference type="NCBIfam" id="TIGR00440">
    <property type="entry name" value="glnS"/>
    <property type="match status" value="1"/>
</dbReference>
<dbReference type="NCBIfam" id="NF011291">
    <property type="entry name" value="PRK14703.1"/>
    <property type="match status" value="1"/>
</dbReference>
<dbReference type="PANTHER" id="PTHR43097:SF5">
    <property type="entry name" value="GLUTAMATE--TRNA LIGASE"/>
    <property type="match status" value="1"/>
</dbReference>
<dbReference type="PANTHER" id="PTHR43097">
    <property type="entry name" value="GLUTAMINE-TRNA LIGASE"/>
    <property type="match status" value="1"/>
</dbReference>
<dbReference type="Pfam" id="PF00749">
    <property type="entry name" value="tRNA-synt_1c"/>
    <property type="match status" value="1"/>
</dbReference>
<dbReference type="Pfam" id="PF03950">
    <property type="entry name" value="tRNA-synt_1c_C"/>
    <property type="match status" value="1"/>
</dbReference>
<dbReference type="Pfam" id="PF20974">
    <property type="entry name" value="tRNA-synt_1c_C2"/>
    <property type="match status" value="1"/>
</dbReference>
<dbReference type="PRINTS" id="PR00987">
    <property type="entry name" value="TRNASYNTHGLU"/>
</dbReference>
<dbReference type="SUPFAM" id="SSF52374">
    <property type="entry name" value="Nucleotidylyl transferase"/>
    <property type="match status" value="1"/>
</dbReference>
<dbReference type="SUPFAM" id="SSF50715">
    <property type="entry name" value="Ribosomal protein L25-like"/>
    <property type="match status" value="1"/>
</dbReference>
<dbReference type="PROSITE" id="PS00178">
    <property type="entry name" value="AA_TRNA_LIGASE_I"/>
    <property type="match status" value="1"/>
</dbReference>
<sequence>MSHDNKPTDSNPAASNFLRSIIDQDLAAGTYAGRQDKQGEPLPTVITRFPPEPNGYLHIGHAKSICLNFGLARDYGGRCHLRFDDTNPVKEDTEYVESIIDAVHWLGFSWDSEGKDGQKQPHLYYASDYFDQLYAFAETLIERGAAYVDSQSAEQIAASRGNFSEPGKPSPFRDRSVEENLQLFRDMRAGKYADGEHVLRAKIDMAAPNIVMRDPVLYRIRHAHHHRTGDKWCIYPMYDFTHCISDALENITHSLCTLEFENNRPLYDWVLEHLRDSGVFRDPLPHQYEFARLNLTYAITSKRKLKQLVDEQRVDGWDDPRMPTLVGVRRRGYTPESIQLFCDRVGVAKADSWIDMSTLEGSVRDDLDGRAARGVAVLDPLKLIIDNYPEGQSEECSAPVHPKKPELGKRVFPLSRELWIEREDFNETPPKGYFRLFPGNKVRLKYGYVIECTGVDKDADGNVIAVHASYLPDTKSGTPGADSVKVKGVIHWVSAAHAYEAEVRLYDRLFNDPNPDAGGKNFLDALNPDSKQVITAYLEPGLREAQPEDRFQFERHGYFVADRSDSTPGKPVFNRIVGLKDSWGK</sequence>
<keyword id="KW-0030">Aminoacyl-tRNA synthetase</keyword>
<keyword id="KW-0067">ATP-binding</keyword>
<keyword id="KW-0963">Cytoplasm</keyword>
<keyword id="KW-0436">Ligase</keyword>
<keyword id="KW-0547">Nucleotide-binding</keyword>
<keyword id="KW-0648">Protein biosynthesis</keyword>
<feature type="chain" id="PRO_1000095487" description="Glutamine--tRNA ligase">
    <location>
        <begin position="1"/>
        <end position="585"/>
    </location>
</feature>
<feature type="short sequence motif" description="'HIGH' region" evidence="1">
    <location>
        <begin position="51"/>
        <end position="61"/>
    </location>
</feature>
<feature type="short sequence motif" description="'KMSKS' region" evidence="1">
    <location>
        <begin position="299"/>
        <end position="303"/>
    </location>
</feature>
<feature type="binding site" evidence="1">
    <location>
        <begin position="52"/>
        <end position="54"/>
    </location>
    <ligand>
        <name>ATP</name>
        <dbReference type="ChEBI" id="CHEBI:30616"/>
    </ligand>
</feature>
<feature type="binding site" evidence="1">
    <location>
        <begin position="58"/>
        <end position="64"/>
    </location>
    <ligand>
        <name>ATP</name>
        <dbReference type="ChEBI" id="CHEBI:30616"/>
    </ligand>
</feature>
<feature type="binding site" evidence="1">
    <location>
        <position position="84"/>
    </location>
    <ligand>
        <name>L-glutamine</name>
        <dbReference type="ChEBI" id="CHEBI:58359"/>
    </ligand>
</feature>
<feature type="binding site" evidence="1">
    <location>
        <position position="238"/>
    </location>
    <ligand>
        <name>L-glutamine</name>
        <dbReference type="ChEBI" id="CHEBI:58359"/>
    </ligand>
</feature>
<feature type="binding site" evidence="1">
    <location>
        <position position="257"/>
    </location>
    <ligand>
        <name>ATP</name>
        <dbReference type="ChEBI" id="CHEBI:30616"/>
    </ligand>
</feature>
<feature type="binding site" evidence="1">
    <location>
        <begin position="292"/>
        <end position="293"/>
    </location>
    <ligand>
        <name>ATP</name>
        <dbReference type="ChEBI" id="CHEBI:30616"/>
    </ligand>
</feature>
<name>SYQ_CUPTR</name>
<proteinExistence type="inferred from homology"/>
<comment type="catalytic activity">
    <reaction evidence="1">
        <text>tRNA(Gln) + L-glutamine + ATP = L-glutaminyl-tRNA(Gln) + AMP + diphosphate</text>
        <dbReference type="Rhea" id="RHEA:20121"/>
        <dbReference type="Rhea" id="RHEA-COMP:9662"/>
        <dbReference type="Rhea" id="RHEA-COMP:9681"/>
        <dbReference type="ChEBI" id="CHEBI:30616"/>
        <dbReference type="ChEBI" id="CHEBI:33019"/>
        <dbReference type="ChEBI" id="CHEBI:58359"/>
        <dbReference type="ChEBI" id="CHEBI:78442"/>
        <dbReference type="ChEBI" id="CHEBI:78521"/>
        <dbReference type="ChEBI" id="CHEBI:456215"/>
        <dbReference type="EC" id="6.1.1.18"/>
    </reaction>
</comment>
<comment type="subunit">
    <text evidence="1">Monomer.</text>
</comment>
<comment type="subcellular location">
    <subcellularLocation>
        <location evidence="1">Cytoplasm</location>
    </subcellularLocation>
</comment>
<comment type="similarity">
    <text evidence="1">Belongs to the class-I aminoacyl-tRNA synthetase family.</text>
</comment>
<evidence type="ECO:0000255" key="1">
    <source>
        <dbReference type="HAMAP-Rule" id="MF_00126"/>
    </source>
</evidence>
<accession>B3R5N3</accession>
<organism>
    <name type="scientific">Cupriavidus taiwanensis (strain DSM 17343 / BCRC 17206 / CCUG 44338 / CIP 107171 / LMG 19424 / R1)</name>
    <name type="common">Ralstonia taiwanensis (strain LMG 19424)</name>
    <dbReference type="NCBI Taxonomy" id="977880"/>
    <lineage>
        <taxon>Bacteria</taxon>
        <taxon>Pseudomonadati</taxon>
        <taxon>Pseudomonadota</taxon>
        <taxon>Betaproteobacteria</taxon>
        <taxon>Burkholderiales</taxon>
        <taxon>Burkholderiaceae</taxon>
        <taxon>Cupriavidus</taxon>
    </lineage>
</organism>